<accession>Q54975</accession>
<accession>Q31NB1</accession>
<keyword id="KW-0067">ATP-binding</keyword>
<keyword id="KW-0436">Ligase</keyword>
<keyword id="KW-0547">Nucleotide-binding</keyword>
<keyword id="KW-0658">Purine biosynthesis</keyword>
<keyword id="KW-1185">Reference proteome</keyword>
<reference key="1">
    <citation type="submission" date="1996-06" db="EMBL/GenBank/DDBJ databases">
        <authorList>
            <person name="Lieman-Hurwitz J."/>
            <person name="Bonfil D."/>
            <person name="Ronen-Tarazi M."/>
            <person name="Kaplan A."/>
        </authorList>
    </citation>
    <scope>NUCLEOTIDE SEQUENCE [GENOMIC DNA]</scope>
</reference>
<reference key="2">
    <citation type="submission" date="2005-08" db="EMBL/GenBank/DDBJ databases">
        <title>Complete sequence of chromosome 1 of Synechococcus elongatus PCC 7942.</title>
        <authorList>
            <consortium name="US DOE Joint Genome Institute"/>
            <person name="Copeland A."/>
            <person name="Lucas S."/>
            <person name="Lapidus A."/>
            <person name="Barry K."/>
            <person name="Detter J.C."/>
            <person name="Glavina T."/>
            <person name="Hammon N."/>
            <person name="Israni S."/>
            <person name="Pitluck S."/>
            <person name="Schmutz J."/>
            <person name="Larimer F."/>
            <person name="Land M."/>
            <person name="Kyrpides N."/>
            <person name="Lykidis A."/>
            <person name="Golden S."/>
            <person name="Richardson P."/>
        </authorList>
    </citation>
    <scope>NUCLEOTIDE SEQUENCE [LARGE SCALE GENOMIC DNA]</scope>
    <source>
        <strain>ATCC 33912 / PCC 7942 / FACHB-805</strain>
    </source>
</reference>
<dbReference type="EC" id="6.3.4.18" evidence="1"/>
<dbReference type="EMBL" id="U62615">
    <property type="protein sequence ID" value="AAB05791.1"/>
    <property type="molecule type" value="Genomic_DNA"/>
</dbReference>
<dbReference type="EMBL" id="CP000100">
    <property type="protein sequence ID" value="ABB57458.1"/>
    <property type="molecule type" value="Genomic_DNA"/>
</dbReference>
<dbReference type="RefSeq" id="WP_011242442.1">
    <property type="nucleotide sequence ID" value="NZ_JACJTX010000004.1"/>
</dbReference>
<dbReference type="SMR" id="Q54975"/>
<dbReference type="STRING" id="1140.Synpcc7942_1428"/>
<dbReference type="PaxDb" id="1140-Synpcc7942_1428"/>
<dbReference type="GeneID" id="72430290"/>
<dbReference type="KEGG" id="syf:Synpcc7942_1428"/>
<dbReference type="eggNOG" id="COG0026">
    <property type="taxonomic scope" value="Bacteria"/>
</dbReference>
<dbReference type="HOGENOM" id="CLU_011534_0_2_3"/>
<dbReference type="OrthoDB" id="9804625at2"/>
<dbReference type="BioCyc" id="SYNEL:SYNPCC7942_1428-MONOMER"/>
<dbReference type="UniPathway" id="UPA00074">
    <property type="reaction ID" value="UER00942"/>
</dbReference>
<dbReference type="Proteomes" id="UP000889800">
    <property type="component" value="Chromosome"/>
</dbReference>
<dbReference type="GO" id="GO:0005829">
    <property type="term" value="C:cytosol"/>
    <property type="evidence" value="ECO:0007669"/>
    <property type="project" value="TreeGrafter"/>
</dbReference>
<dbReference type="GO" id="GO:0034028">
    <property type="term" value="F:5-(carboxyamino)imidazole ribonucleotide synthase activity"/>
    <property type="evidence" value="ECO:0007669"/>
    <property type="project" value="UniProtKB-UniRule"/>
</dbReference>
<dbReference type="GO" id="GO:0005524">
    <property type="term" value="F:ATP binding"/>
    <property type="evidence" value="ECO:0007669"/>
    <property type="project" value="UniProtKB-KW"/>
</dbReference>
<dbReference type="GO" id="GO:0046872">
    <property type="term" value="F:metal ion binding"/>
    <property type="evidence" value="ECO:0007669"/>
    <property type="project" value="InterPro"/>
</dbReference>
<dbReference type="GO" id="GO:0004638">
    <property type="term" value="F:phosphoribosylaminoimidazole carboxylase activity"/>
    <property type="evidence" value="ECO:0007669"/>
    <property type="project" value="InterPro"/>
</dbReference>
<dbReference type="GO" id="GO:0006189">
    <property type="term" value="P:'de novo' IMP biosynthetic process"/>
    <property type="evidence" value="ECO:0007669"/>
    <property type="project" value="UniProtKB-UniRule"/>
</dbReference>
<dbReference type="Gene3D" id="3.40.50.20">
    <property type="match status" value="1"/>
</dbReference>
<dbReference type="Gene3D" id="3.30.1490.20">
    <property type="entry name" value="ATP-grasp fold, A domain"/>
    <property type="match status" value="1"/>
</dbReference>
<dbReference type="Gene3D" id="3.30.470.20">
    <property type="entry name" value="ATP-grasp fold, B domain"/>
    <property type="match status" value="1"/>
</dbReference>
<dbReference type="HAMAP" id="MF_01928">
    <property type="entry name" value="PurK"/>
    <property type="match status" value="1"/>
</dbReference>
<dbReference type="InterPro" id="IPR011761">
    <property type="entry name" value="ATP-grasp"/>
</dbReference>
<dbReference type="InterPro" id="IPR003135">
    <property type="entry name" value="ATP-grasp_carboxylate-amine"/>
</dbReference>
<dbReference type="InterPro" id="IPR013815">
    <property type="entry name" value="ATP_grasp_subdomain_1"/>
</dbReference>
<dbReference type="InterPro" id="IPR016185">
    <property type="entry name" value="PreATP-grasp_dom_sf"/>
</dbReference>
<dbReference type="InterPro" id="IPR005875">
    <property type="entry name" value="PurK"/>
</dbReference>
<dbReference type="InterPro" id="IPR040686">
    <property type="entry name" value="PurK_C"/>
</dbReference>
<dbReference type="InterPro" id="IPR054350">
    <property type="entry name" value="PurT/PurK_preATP-grasp"/>
</dbReference>
<dbReference type="InterPro" id="IPR011054">
    <property type="entry name" value="Rudment_hybrid_motif"/>
</dbReference>
<dbReference type="NCBIfam" id="NF004679">
    <property type="entry name" value="PRK06019.1-5"/>
    <property type="match status" value="1"/>
</dbReference>
<dbReference type="NCBIfam" id="TIGR01161">
    <property type="entry name" value="purK"/>
    <property type="match status" value="1"/>
</dbReference>
<dbReference type="PANTHER" id="PTHR11609:SF5">
    <property type="entry name" value="PHOSPHORIBOSYLAMINOIMIDAZOLE CARBOXYLASE"/>
    <property type="match status" value="1"/>
</dbReference>
<dbReference type="PANTHER" id="PTHR11609">
    <property type="entry name" value="PURINE BIOSYNTHESIS PROTEIN 6/7, PUR6/7"/>
    <property type="match status" value="1"/>
</dbReference>
<dbReference type="Pfam" id="PF02222">
    <property type="entry name" value="ATP-grasp"/>
    <property type="match status" value="1"/>
</dbReference>
<dbReference type="Pfam" id="PF17769">
    <property type="entry name" value="PurK_C"/>
    <property type="match status" value="1"/>
</dbReference>
<dbReference type="Pfam" id="PF22660">
    <property type="entry name" value="RS_preATP-grasp-like"/>
    <property type="match status" value="1"/>
</dbReference>
<dbReference type="SUPFAM" id="SSF56059">
    <property type="entry name" value="Glutathione synthetase ATP-binding domain-like"/>
    <property type="match status" value="1"/>
</dbReference>
<dbReference type="SUPFAM" id="SSF52440">
    <property type="entry name" value="PreATP-grasp domain"/>
    <property type="match status" value="1"/>
</dbReference>
<dbReference type="SUPFAM" id="SSF51246">
    <property type="entry name" value="Rudiment single hybrid motif"/>
    <property type="match status" value="1"/>
</dbReference>
<dbReference type="PROSITE" id="PS50975">
    <property type="entry name" value="ATP_GRASP"/>
    <property type="match status" value="1"/>
</dbReference>
<name>PURK_SYNE7</name>
<evidence type="ECO:0000255" key="1">
    <source>
        <dbReference type="HAMAP-Rule" id="MF_01928"/>
    </source>
</evidence>
<evidence type="ECO:0000305" key="2"/>
<proteinExistence type="inferred from homology"/>
<protein>
    <recommendedName>
        <fullName evidence="1">N5-carboxyaminoimidazole ribonucleotide synthase</fullName>
        <shortName evidence="1">N5-CAIR synthase</shortName>
        <ecNumber evidence="1">6.3.4.18</ecNumber>
    </recommendedName>
    <alternativeName>
        <fullName evidence="1">5-(carboxyamino)imidazole ribonucleotide synthetase</fullName>
    </alternativeName>
</protein>
<organism>
    <name type="scientific">Synechococcus elongatus (strain ATCC 33912 / PCC 7942 / FACHB-805)</name>
    <name type="common">Anacystis nidulans R2</name>
    <dbReference type="NCBI Taxonomy" id="1140"/>
    <lineage>
        <taxon>Bacteria</taxon>
        <taxon>Bacillati</taxon>
        <taxon>Cyanobacteriota</taxon>
        <taxon>Cyanophyceae</taxon>
        <taxon>Synechococcales</taxon>
        <taxon>Synechococcaceae</taxon>
        <taxon>Synechococcus</taxon>
    </lineage>
</organism>
<feature type="chain" id="PRO_0000075013" description="N5-carboxyaminoimidazole ribonucleotide synthase">
    <location>
        <begin position="1"/>
        <end position="395"/>
    </location>
</feature>
<feature type="domain" description="ATP-grasp" evidence="1">
    <location>
        <begin position="113"/>
        <end position="298"/>
    </location>
</feature>
<feature type="binding site" evidence="1">
    <location>
        <position position="109"/>
    </location>
    <ligand>
        <name>ATP</name>
        <dbReference type="ChEBI" id="CHEBI:30616"/>
    </ligand>
</feature>
<feature type="binding site" evidence="1">
    <location>
        <position position="149"/>
    </location>
    <ligand>
        <name>ATP</name>
        <dbReference type="ChEBI" id="CHEBI:30616"/>
    </ligand>
</feature>
<feature type="binding site" evidence="1">
    <location>
        <begin position="184"/>
        <end position="187"/>
    </location>
    <ligand>
        <name>ATP</name>
        <dbReference type="ChEBI" id="CHEBI:30616"/>
    </ligand>
</feature>
<feature type="binding site" evidence="1">
    <location>
        <position position="192"/>
    </location>
    <ligand>
        <name>ATP</name>
        <dbReference type="ChEBI" id="CHEBI:30616"/>
    </ligand>
</feature>
<feature type="binding site" evidence="1">
    <location>
        <begin position="268"/>
        <end position="269"/>
    </location>
    <ligand>
        <name>ATP</name>
        <dbReference type="ChEBI" id="CHEBI:30616"/>
    </ligand>
</feature>
<feature type="sequence conflict" description="In Ref. 1; AAB05791." evidence="2" ref="1">
    <original>A</original>
    <variation>R</variation>
    <location>
        <position position="59"/>
    </location>
</feature>
<gene>
    <name evidence="1" type="primary">purK</name>
    <name type="ordered locus">Synpcc7942_1428</name>
</gene>
<comment type="function">
    <text evidence="1">Catalyzes the ATP-dependent conversion of 5-aminoimidazole ribonucleotide (AIR) and HCO(3)(-) to N5-carboxyaminoimidazole ribonucleotide (N5-CAIR).</text>
</comment>
<comment type="catalytic activity">
    <reaction evidence="1">
        <text>5-amino-1-(5-phospho-beta-D-ribosyl)imidazole + hydrogencarbonate + ATP = 5-carboxyamino-1-(5-phospho-D-ribosyl)imidazole + ADP + phosphate + 2 H(+)</text>
        <dbReference type="Rhea" id="RHEA:19317"/>
        <dbReference type="ChEBI" id="CHEBI:15378"/>
        <dbReference type="ChEBI" id="CHEBI:17544"/>
        <dbReference type="ChEBI" id="CHEBI:30616"/>
        <dbReference type="ChEBI" id="CHEBI:43474"/>
        <dbReference type="ChEBI" id="CHEBI:58730"/>
        <dbReference type="ChEBI" id="CHEBI:137981"/>
        <dbReference type="ChEBI" id="CHEBI:456216"/>
        <dbReference type="EC" id="6.3.4.18"/>
    </reaction>
</comment>
<comment type="pathway">
    <text evidence="1">Purine metabolism; IMP biosynthesis via de novo pathway; 5-amino-1-(5-phospho-D-ribosyl)imidazole-4-carboxylate from 5-amino-1-(5-phospho-D-ribosyl)imidazole (N5-CAIR route): step 1/2.</text>
</comment>
<comment type="subunit">
    <text evidence="1">Homodimer.</text>
</comment>
<comment type="similarity">
    <text evidence="1">Belongs to the PurK/PurT family.</text>
</comment>
<sequence length="395" mass="42459">MNAIAVSPVQHVGVIGGGQLAWMLAPAAQQLGMSLHVQTPNDHDPAVAIADQTVLAAVADAAATAKLAQACDVITFENEFVDLPALTELEETGVRFRPRPAAIASLLDKLDQRQLLTRLGLPTPRFLAIAAATATESELTALGFPVVLKQRRHGYDGKGTQVLRSLAELQQALQSYGDTPLLLEEFIPFEQELAVMVARSQSGAIATFPVVQTHQQNQVCRWVVAPAAIPGALQKAVAAIARTLVETVDYVGVAGIELFQQGDRLWVNEIAPRTHNSGHYSLDACQTSQFEQQLRAIADLPLGSTALQWPGALMVNLLGFEDHQSGYAELRQQLAALPGACLYWYGKTESKPGRKLGHITLPLSGASSTERAQQAQTMLAQVEAIWPNPDTAHQP</sequence>